<sequence length="234" mass="26511">MRDEIFKEPISKQFEFDDFVASVFDDMISRSVPFYDVSSNLNAKLLAKILPKSAKVCDLGCSTANSLLLLNNLRNDLVLSGVDNSEAMLANAKNKAKAYGASINFILADITECELAGFDAVLANYTLQFIRPPKRADLVQKIYNGLNENGVFLFSEKIIFEDKKLTKSVIEIYEDYKQAQGYSRYEIAQKREALENVLVPYTEEENRNLALNAGFKRVESTFKWGNFMSFLAFK</sequence>
<comment type="function">
    <text evidence="1">Catalyzes the conversion of S-adenosyl-L-methionine (SAM) to carboxy-S-adenosyl-L-methionine (Cx-SAM).</text>
</comment>
<comment type="catalytic activity">
    <reaction evidence="1">
        <text>prephenate + S-adenosyl-L-methionine = carboxy-S-adenosyl-L-methionine + 3-phenylpyruvate + H2O</text>
        <dbReference type="Rhea" id="RHEA:51692"/>
        <dbReference type="ChEBI" id="CHEBI:15377"/>
        <dbReference type="ChEBI" id="CHEBI:18005"/>
        <dbReference type="ChEBI" id="CHEBI:29934"/>
        <dbReference type="ChEBI" id="CHEBI:59789"/>
        <dbReference type="ChEBI" id="CHEBI:134278"/>
    </reaction>
</comment>
<comment type="subunit">
    <text evidence="1">Homodimer.</text>
</comment>
<comment type="similarity">
    <text evidence="1">Belongs to the class I-like SAM-binding methyltransferase superfamily. Cx-SAM synthase family.</text>
</comment>
<protein>
    <recommendedName>
        <fullName evidence="1">Carboxy-S-adenosyl-L-methionine synthase</fullName>
        <shortName evidence="1">Cx-SAM synthase</shortName>
        <ecNumber evidence="1">2.1.3.-</ecNumber>
    </recommendedName>
</protein>
<accession>A7ZED5</accession>
<feature type="chain" id="PRO_0000381954" description="Carboxy-S-adenosyl-L-methionine synthase">
    <location>
        <begin position="1"/>
        <end position="234"/>
    </location>
</feature>
<feature type="binding site" evidence="1">
    <location>
        <position position="35"/>
    </location>
    <ligand>
        <name>S-adenosyl-L-methionine</name>
        <dbReference type="ChEBI" id="CHEBI:59789"/>
    </ligand>
</feature>
<feature type="binding site" evidence="1">
    <location>
        <begin position="60"/>
        <end position="62"/>
    </location>
    <ligand>
        <name>S-adenosyl-L-methionine</name>
        <dbReference type="ChEBI" id="CHEBI:59789"/>
    </ligand>
</feature>
<feature type="binding site" evidence="1">
    <location>
        <begin position="83"/>
        <end position="84"/>
    </location>
    <ligand>
        <name>S-adenosyl-L-methionine</name>
        <dbReference type="ChEBI" id="CHEBI:59789"/>
    </ligand>
</feature>
<feature type="binding site" evidence="1">
    <location>
        <begin position="109"/>
        <end position="110"/>
    </location>
    <ligand>
        <name>S-adenosyl-L-methionine</name>
        <dbReference type="ChEBI" id="CHEBI:59789"/>
    </ligand>
</feature>
<feature type="binding site" evidence="1">
    <location>
        <position position="124"/>
    </location>
    <ligand>
        <name>S-adenosyl-L-methionine</name>
        <dbReference type="ChEBI" id="CHEBI:59789"/>
    </ligand>
</feature>
<feature type="binding site" evidence="1">
    <location>
        <position position="191"/>
    </location>
    <ligand>
        <name>S-adenosyl-L-methionine</name>
        <dbReference type="ChEBI" id="CHEBI:59789"/>
    </ligand>
</feature>
<name>CMOA_CAMC1</name>
<organism>
    <name type="scientific">Campylobacter concisus (strain 13826)</name>
    <dbReference type="NCBI Taxonomy" id="360104"/>
    <lineage>
        <taxon>Bacteria</taxon>
        <taxon>Pseudomonadati</taxon>
        <taxon>Campylobacterota</taxon>
        <taxon>Epsilonproteobacteria</taxon>
        <taxon>Campylobacterales</taxon>
        <taxon>Campylobacteraceae</taxon>
        <taxon>Campylobacter</taxon>
    </lineage>
</organism>
<keyword id="KW-0949">S-adenosyl-L-methionine</keyword>
<keyword id="KW-0808">Transferase</keyword>
<gene>
    <name evidence="1" type="primary">cmoA</name>
    <name type="ordered locus">Ccon26_12880</name>
    <name type="ORF">CCC13826_2026</name>
</gene>
<evidence type="ECO:0000255" key="1">
    <source>
        <dbReference type="HAMAP-Rule" id="MF_01589"/>
    </source>
</evidence>
<dbReference type="EC" id="2.1.3.-" evidence="1"/>
<dbReference type="EMBL" id="CP000792">
    <property type="protein sequence ID" value="EAT98792.1"/>
    <property type="molecule type" value="Genomic_DNA"/>
</dbReference>
<dbReference type="RefSeq" id="WP_012140054.1">
    <property type="nucleotide sequence ID" value="NC_009802.2"/>
</dbReference>
<dbReference type="SMR" id="A7ZED5"/>
<dbReference type="STRING" id="360104.CCC13826_2026"/>
<dbReference type="KEGG" id="cco:CCC13826_2026"/>
<dbReference type="eggNOG" id="COG2890">
    <property type="taxonomic scope" value="Bacteria"/>
</dbReference>
<dbReference type="HOGENOM" id="CLU_078475_0_0_7"/>
<dbReference type="OrthoDB" id="5386938at2"/>
<dbReference type="Proteomes" id="UP000001121">
    <property type="component" value="Chromosome"/>
</dbReference>
<dbReference type="GO" id="GO:0016743">
    <property type="term" value="F:carboxyl- or carbamoyltransferase activity"/>
    <property type="evidence" value="ECO:0007669"/>
    <property type="project" value="UniProtKB-UniRule"/>
</dbReference>
<dbReference type="GO" id="GO:1904047">
    <property type="term" value="F:S-adenosyl-L-methionine binding"/>
    <property type="evidence" value="ECO:0007669"/>
    <property type="project" value="UniProtKB-UniRule"/>
</dbReference>
<dbReference type="GO" id="GO:0002098">
    <property type="term" value="P:tRNA wobble uridine modification"/>
    <property type="evidence" value="ECO:0007669"/>
    <property type="project" value="InterPro"/>
</dbReference>
<dbReference type="CDD" id="cd02440">
    <property type="entry name" value="AdoMet_MTases"/>
    <property type="match status" value="1"/>
</dbReference>
<dbReference type="Gene3D" id="3.40.50.150">
    <property type="entry name" value="Vaccinia Virus protein VP39"/>
    <property type="match status" value="1"/>
</dbReference>
<dbReference type="HAMAP" id="MF_01589">
    <property type="entry name" value="Cx_SAM_synthase"/>
    <property type="match status" value="1"/>
</dbReference>
<dbReference type="InterPro" id="IPR005271">
    <property type="entry name" value="CmoA"/>
</dbReference>
<dbReference type="InterPro" id="IPR041698">
    <property type="entry name" value="Methyltransf_25"/>
</dbReference>
<dbReference type="InterPro" id="IPR029063">
    <property type="entry name" value="SAM-dependent_MTases_sf"/>
</dbReference>
<dbReference type="NCBIfam" id="TIGR00740">
    <property type="entry name" value="carboxy-S-adenosyl-L-methionine synthase CmoA"/>
    <property type="match status" value="1"/>
</dbReference>
<dbReference type="PANTHER" id="PTHR43861:SF2">
    <property type="entry name" value="CARBOXY-S-ADENOSYL-L-METHIONINE SYNTHASE"/>
    <property type="match status" value="1"/>
</dbReference>
<dbReference type="PANTHER" id="PTHR43861">
    <property type="entry name" value="TRANS-ACONITATE 2-METHYLTRANSFERASE-RELATED"/>
    <property type="match status" value="1"/>
</dbReference>
<dbReference type="Pfam" id="PF13649">
    <property type="entry name" value="Methyltransf_25"/>
    <property type="match status" value="1"/>
</dbReference>
<dbReference type="PIRSF" id="PIRSF006325">
    <property type="entry name" value="MeTrfase_bac"/>
    <property type="match status" value="1"/>
</dbReference>
<dbReference type="SUPFAM" id="SSF53335">
    <property type="entry name" value="S-adenosyl-L-methionine-dependent methyltransferases"/>
    <property type="match status" value="1"/>
</dbReference>
<proteinExistence type="inferred from homology"/>
<reference key="1">
    <citation type="submission" date="2007-10" db="EMBL/GenBank/DDBJ databases">
        <title>Genome sequence of Campylobacter concisus 13826 isolated from human feces.</title>
        <authorList>
            <person name="Fouts D.E."/>
            <person name="Mongodin E.F."/>
            <person name="Puiu D."/>
            <person name="Sebastian Y."/>
            <person name="Miller W.G."/>
            <person name="Mandrell R.E."/>
            <person name="On S."/>
            <person name="Nelson K.E."/>
        </authorList>
    </citation>
    <scope>NUCLEOTIDE SEQUENCE [LARGE SCALE GENOMIC DNA]</scope>
    <source>
        <strain>13826</strain>
    </source>
</reference>